<evidence type="ECO:0000255" key="1">
    <source>
        <dbReference type="HAMAP-Rule" id="MF_00294"/>
    </source>
</evidence>
<evidence type="ECO:0000305" key="2"/>
<keyword id="KW-0687">Ribonucleoprotein</keyword>
<keyword id="KW-0689">Ribosomal protein</keyword>
<gene>
    <name evidence="1" type="primary">rpmG</name>
    <name type="ordered locus">PC1_4098</name>
</gene>
<organism>
    <name type="scientific">Pectobacterium carotovorum subsp. carotovorum (strain PC1)</name>
    <dbReference type="NCBI Taxonomy" id="561230"/>
    <lineage>
        <taxon>Bacteria</taxon>
        <taxon>Pseudomonadati</taxon>
        <taxon>Pseudomonadota</taxon>
        <taxon>Gammaproteobacteria</taxon>
        <taxon>Enterobacterales</taxon>
        <taxon>Pectobacteriaceae</taxon>
        <taxon>Pectobacterium</taxon>
    </lineage>
</organism>
<name>RL33_PECCP</name>
<accession>C6DIB9</accession>
<sequence>MAKGVREKIKLVSSAGTGHFYTTTKNKRTKPEKLELKKFDPVVRQHVVYKEAKIK</sequence>
<protein>
    <recommendedName>
        <fullName evidence="1">Large ribosomal subunit protein bL33</fullName>
    </recommendedName>
    <alternativeName>
        <fullName evidence="2">50S ribosomal protein L33</fullName>
    </alternativeName>
</protein>
<comment type="similarity">
    <text evidence="1">Belongs to the bacterial ribosomal protein bL33 family.</text>
</comment>
<feature type="chain" id="PRO_1000204913" description="Large ribosomal subunit protein bL33">
    <location>
        <begin position="1"/>
        <end position="55"/>
    </location>
</feature>
<reference key="1">
    <citation type="submission" date="2009-07" db="EMBL/GenBank/DDBJ databases">
        <title>Complete sequence of Pectobacterium carotovorum subsp. carotovorum PC1.</title>
        <authorList>
            <consortium name="US DOE Joint Genome Institute"/>
            <person name="Lucas S."/>
            <person name="Copeland A."/>
            <person name="Lapidus A."/>
            <person name="Glavina del Rio T."/>
            <person name="Tice H."/>
            <person name="Bruce D."/>
            <person name="Goodwin L."/>
            <person name="Pitluck S."/>
            <person name="Munk A.C."/>
            <person name="Brettin T."/>
            <person name="Detter J.C."/>
            <person name="Han C."/>
            <person name="Tapia R."/>
            <person name="Larimer F."/>
            <person name="Land M."/>
            <person name="Hauser L."/>
            <person name="Kyrpides N."/>
            <person name="Mikhailova N."/>
            <person name="Balakrishnan V."/>
            <person name="Glasner J."/>
            <person name="Perna N.T."/>
        </authorList>
    </citation>
    <scope>NUCLEOTIDE SEQUENCE [LARGE SCALE GENOMIC DNA]</scope>
    <source>
        <strain>PC1</strain>
    </source>
</reference>
<dbReference type="EMBL" id="CP001657">
    <property type="protein sequence ID" value="ACT15113.1"/>
    <property type="molecule type" value="Genomic_DNA"/>
</dbReference>
<dbReference type="RefSeq" id="WP_002442576.1">
    <property type="nucleotide sequence ID" value="NC_012917.1"/>
</dbReference>
<dbReference type="SMR" id="C6DIB9"/>
<dbReference type="STRING" id="561230.PC1_4098"/>
<dbReference type="GeneID" id="98190885"/>
<dbReference type="KEGG" id="pct:PC1_4098"/>
<dbReference type="eggNOG" id="COG0267">
    <property type="taxonomic scope" value="Bacteria"/>
</dbReference>
<dbReference type="HOGENOM" id="CLU_190949_1_1_6"/>
<dbReference type="OrthoDB" id="21586at2"/>
<dbReference type="Proteomes" id="UP000002736">
    <property type="component" value="Chromosome"/>
</dbReference>
<dbReference type="GO" id="GO:0022625">
    <property type="term" value="C:cytosolic large ribosomal subunit"/>
    <property type="evidence" value="ECO:0007669"/>
    <property type="project" value="TreeGrafter"/>
</dbReference>
<dbReference type="GO" id="GO:0003735">
    <property type="term" value="F:structural constituent of ribosome"/>
    <property type="evidence" value="ECO:0007669"/>
    <property type="project" value="InterPro"/>
</dbReference>
<dbReference type="GO" id="GO:0006412">
    <property type="term" value="P:translation"/>
    <property type="evidence" value="ECO:0007669"/>
    <property type="project" value="UniProtKB-UniRule"/>
</dbReference>
<dbReference type="FunFam" id="2.20.28.120:FF:000001">
    <property type="entry name" value="50S ribosomal protein L33"/>
    <property type="match status" value="1"/>
</dbReference>
<dbReference type="Gene3D" id="2.20.28.120">
    <property type="entry name" value="Ribosomal protein L33"/>
    <property type="match status" value="1"/>
</dbReference>
<dbReference type="HAMAP" id="MF_00294">
    <property type="entry name" value="Ribosomal_bL33"/>
    <property type="match status" value="1"/>
</dbReference>
<dbReference type="InterPro" id="IPR001705">
    <property type="entry name" value="Ribosomal_bL33"/>
</dbReference>
<dbReference type="InterPro" id="IPR018264">
    <property type="entry name" value="Ribosomal_bL33_CS"/>
</dbReference>
<dbReference type="InterPro" id="IPR038584">
    <property type="entry name" value="Ribosomal_bL33_sf"/>
</dbReference>
<dbReference type="InterPro" id="IPR011332">
    <property type="entry name" value="Ribosomal_zn-bd"/>
</dbReference>
<dbReference type="NCBIfam" id="NF001860">
    <property type="entry name" value="PRK00595.1"/>
    <property type="match status" value="1"/>
</dbReference>
<dbReference type="NCBIfam" id="TIGR01023">
    <property type="entry name" value="rpmG_bact"/>
    <property type="match status" value="1"/>
</dbReference>
<dbReference type="PANTHER" id="PTHR15238">
    <property type="entry name" value="54S RIBOSOMAL PROTEIN L39, MITOCHONDRIAL"/>
    <property type="match status" value="1"/>
</dbReference>
<dbReference type="PANTHER" id="PTHR15238:SF1">
    <property type="entry name" value="LARGE RIBOSOMAL SUBUNIT PROTEIN BL33M"/>
    <property type="match status" value="1"/>
</dbReference>
<dbReference type="Pfam" id="PF00471">
    <property type="entry name" value="Ribosomal_L33"/>
    <property type="match status" value="1"/>
</dbReference>
<dbReference type="SUPFAM" id="SSF57829">
    <property type="entry name" value="Zn-binding ribosomal proteins"/>
    <property type="match status" value="1"/>
</dbReference>
<dbReference type="PROSITE" id="PS00582">
    <property type="entry name" value="RIBOSOMAL_L33"/>
    <property type="match status" value="1"/>
</dbReference>
<proteinExistence type="inferred from homology"/>